<keyword id="KW-1003">Cell membrane</keyword>
<keyword id="KW-0472">Membrane</keyword>
<keyword id="KW-1185">Reference proteome</keyword>
<keyword id="KW-0812">Transmembrane</keyword>
<keyword id="KW-1133">Transmembrane helix</keyword>
<dbReference type="EMBL" id="X70356">
    <property type="protein sequence ID" value="CAA49822.1"/>
    <property type="molecule type" value="Genomic_DNA"/>
</dbReference>
<dbReference type="EMBL" id="D50453">
    <property type="protein sequence ID" value="BAA08988.1"/>
    <property type="molecule type" value="Genomic_DNA"/>
</dbReference>
<dbReference type="EMBL" id="AL009126">
    <property type="protein sequence ID" value="CAB12148.1"/>
    <property type="molecule type" value="Genomic_DNA"/>
</dbReference>
<dbReference type="PIR" id="I40490">
    <property type="entry name" value="I40490"/>
</dbReference>
<dbReference type="RefSeq" id="NP_388236.1">
    <property type="nucleotide sequence ID" value="NC_000964.3"/>
</dbReference>
<dbReference type="RefSeq" id="WP_003246703.1">
    <property type="nucleotide sequence ID" value="NZ_OZ025638.1"/>
</dbReference>
<dbReference type="FunCoup" id="Q08793">
    <property type="interactions" value="1"/>
</dbReference>
<dbReference type="STRING" id="224308.BSU03540"/>
<dbReference type="PaxDb" id="224308-BSU03540"/>
<dbReference type="EnsemblBacteria" id="CAB12148">
    <property type="protein sequence ID" value="CAB12148"/>
    <property type="gene ID" value="BSU_03540"/>
</dbReference>
<dbReference type="GeneID" id="938305"/>
<dbReference type="KEGG" id="bsu:BSU03540"/>
<dbReference type="PATRIC" id="fig|224308.179.peg.371"/>
<dbReference type="eggNOG" id="ENOG5032Y1E">
    <property type="taxonomic scope" value="Bacteria"/>
</dbReference>
<dbReference type="InParanoid" id="Q08793"/>
<dbReference type="OrthoDB" id="2904794at2"/>
<dbReference type="BioCyc" id="BSUB:BSU03540-MONOMER"/>
<dbReference type="Proteomes" id="UP000001570">
    <property type="component" value="Chromosome"/>
</dbReference>
<dbReference type="GO" id="GO:0005886">
    <property type="term" value="C:plasma membrane"/>
    <property type="evidence" value="ECO:0007669"/>
    <property type="project" value="UniProtKB-SubCell"/>
</dbReference>
<dbReference type="InterPro" id="IPR025588">
    <property type="entry name" value="YcxB-like_C"/>
</dbReference>
<dbReference type="Pfam" id="PF14317">
    <property type="entry name" value="YcxB"/>
    <property type="match status" value="1"/>
</dbReference>
<gene>
    <name type="primary">ycxB</name>
    <name type="ordered locus">BSU03540</name>
</gene>
<accession>Q08793</accession>
<comment type="subcellular location">
    <subcellularLocation>
        <location evidence="2">Cell membrane</location>
        <topology evidence="2">Multi-pass membrane protein</topology>
    </subcellularLocation>
</comment>
<feature type="chain" id="PRO_0000049485" description="Uncharacterized protein YcxB">
    <location>
        <begin position="1"/>
        <end position="185"/>
    </location>
</feature>
<feature type="transmembrane region" description="Helical" evidence="1">
    <location>
        <begin position="31"/>
        <end position="51"/>
    </location>
</feature>
<feature type="transmembrane region" description="Helical" evidence="1">
    <location>
        <begin position="68"/>
        <end position="88"/>
    </location>
</feature>
<proteinExistence type="predicted"/>
<organism>
    <name type="scientific">Bacillus subtilis (strain 168)</name>
    <dbReference type="NCBI Taxonomy" id="224308"/>
    <lineage>
        <taxon>Bacteria</taxon>
        <taxon>Bacillati</taxon>
        <taxon>Bacillota</taxon>
        <taxon>Bacilli</taxon>
        <taxon>Bacillales</taxon>
        <taxon>Bacillaceae</taxon>
        <taxon>Bacillus</taxon>
    </lineage>
</organism>
<reference key="1">
    <citation type="journal article" date="1993" name="Mol. Microbiol.">
        <title>Sequence and analysis of the genetic locus responsible for surfactin synthesis in Bacillus subtilis.</title>
        <authorList>
            <person name="Cosmina P."/>
            <person name="Rodriguez F."/>
            <person name="de Ferra F."/>
            <person name="Grandi G."/>
            <person name="Perego M."/>
            <person name="Venema G."/>
            <person name="van Sinderen D."/>
        </authorList>
    </citation>
    <scope>NUCLEOTIDE SEQUENCE [GENOMIC DNA]</scope>
    <source>
        <strain>168 / JH642</strain>
    </source>
</reference>
<reference key="2">
    <citation type="journal article" date="1996" name="Microbiology">
        <title>The 25 degrees-36 degrees region of the Bacillus subtilis chromosome: determination of the sequence of a 146 kb segment and identification of 113 genes.</title>
        <authorList>
            <person name="Yamane K."/>
            <person name="Kumano M."/>
            <person name="Kurita K."/>
        </authorList>
    </citation>
    <scope>NUCLEOTIDE SEQUENCE [GENOMIC DNA]</scope>
    <source>
        <strain>168</strain>
    </source>
</reference>
<reference key="3">
    <citation type="journal article" date="1997" name="Nature">
        <title>The complete genome sequence of the Gram-positive bacterium Bacillus subtilis.</title>
        <authorList>
            <person name="Kunst F."/>
            <person name="Ogasawara N."/>
            <person name="Moszer I."/>
            <person name="Albertini A.M."/>
            <person name="Alloni G."/>
            <person name="Azevedo V."/>
            <person name="Bertero M.G."/>
            <person name="Bessieres P."/>
            <person name="Bolotin A."/>
            <person name="Borchert S."/>
            <person name="Borriss R."/>
            <person name="Boursier L."/>
            <person name="Brans A."/>
            <person name="Braun M."/>
            <person name="Brignell S.C."/>
            <person name="Bron S."/>
            <person name="Brouillet S."/>
            <person name="Bruschi C.V."/>
            <person name="Caldwell B."/>
            <person name="Capuano V."/>
            <person name="Carter N.M."/>
            <person name="Choi S.-K."/>
            <person name="Codani J.-J."/>
            <person name="Connerton I.F."/>
            <person name="Cummings N.J."/>
            <person name="Daniel R.A."/>
            <person name="Denizot F."/>
            <person name="Devine K.M."/>
            <person name="Duesterhoeft A."/>
            <person name="Ehrlich S.D."/>
            <person name="Emmerson P.T."/>
            <person name="Entian K.-D."/>
            <person name="Errington J."/>
            <person name="Fabret C."/>
            <person name="Ferrari E."/>
            <person name="Foulger D."/>
            <person name="Fritz C."/>
            <person name="Fujita M."/>
            <person name="Fujita Y."/>
            <person name="Fuma S."/>
            <person name="Galizzi A."/>
            <person name="Galleron N."/>
            <person name="Ghim S.-Y."/>
            <person name="Glaser P."/>
            <person name="Goffeau A."/>
            <person name="Golightly E.J."/>
            <person name="Grandi G."/>
            <person name="Guiseppi G."/>
            <person name="Guy B.J."/>
            <person name="Haga K."/>
            <person name="Haiech J."/>
            <person name="Harwood C.R."/>
            <person name="Henaut A."/>
            <person name="Hilbert H."/>
            <person name="Holsappel S."/>
            <person name="Hosono S."/>
            <person name="Hullo M.-F."/>
            <person name="Itaya M."/>
            <person name="Jones L.-M."/>
            <person name="Joris B."/>
            <person name="Karamata D."/>
            <person name="Kasahara Y."/>
            <person name="Klaerr-Blanchard M."/>
            <person name="Klein C."/>
            <person name="Kobayashi Y."/>
            <person name="Koetter P."/>
            <person name="Koningstein G."/>
            <person name="Krogh S."/>
            <person name="Kumano M."/>
            <person name="Kurita K."/>
            <person name="Lapidus A."/>
            <person name="Lardinois S."/>
            <person name="Lauber J."/>
            <person name="Lazarevic V."/>
            <person name="Lee S.-M."/>
            <person name="Levine A."/>
            <person name="Liu H."/>
            <person name="Masuda S."/>
            <person name="Mauel C."/>
            <person name="Medigue C."/>
            <person name="Medina N."/>
            <person name="Mellado R.P."/>
            <person name="Mizuno M."/>
            <person name="Moestl D."/>
            <person name="Nakai S."/>
            <person name="Noback M."/>
            <person name="Noone D."/>
            <person name="O'Reilly M."/>
            <person name="Ogawa K."/>
            <person name="Ogiwara A."/>
            <person name="Oudega B."/>
            <person name="Park S.-H."/>
            <person name="Parro V."/>
            <person name="Pohl T.M."/>
            <person name="Portetelle D."/>
            <person name="Porwollik S."/>
            <person name="Prescott A.M."/>
            <person name="Presecan E."/>
            <person name="Pujic P."/>
            <person name="Purnelle B."/>
            <person name="Rapoport G."/>
            <person name="Rey M."/>
            <person name="Reynolds S."/>
            <person name="Rieger M."/>
            <person name="Rivolta C."/>
            <person name="Rocha E."/>
            <person name="Roche B."/>
            <person name="Rose M."/>
            <person name="Sadaie Y."/>
            <person name="Sato T."/>
            <person name="Scanlan E."/>
            <person name="Schleich S."/>
            <person name="Schroeter R."/>
            <person name="Scoffone F."/>
            <person name="Sekiguchi J."/>
            <person name="Sekowska A."/>
            <person name="Seror S.J."/>
            <person name="Serror P."/>
            <person name="Shin B.-S."/>
            <person name="Soldo B."/>
            <person name="Sorokin A."/>
            <person name="Tacconi E."/>
            <person name="Takagi T."/>
            <person name="Takahashi H."/>
            <person name="Takemaru K."/>
            <person name="Takeuchi M."/>
            <person name="Tamakoshi A."/>
            <person name="Tanaka T."/>
            <person name="Terpstra P."/>
            <person name="Tognoni A."/>
            <person name="Tosato V."/>
            <person name="Uchiyama S."/>
            <person name="Vandenbol M."/>
            <person name="Vannier F."/>
            <person name="Vassarotti A."/>
            <person name="Viari A."/>
            <person name="Wambutt R."/>
            <person name="Wedler E."/>
            <person name="Wedler H."/>
            <person name="Weitzenegger T."/>
            <person name="Winters P."/>
            <person name="Wipat A."/>
            <person name="Yamamoto H."/>
            <person name="Yamane K."/>
            <person name="Yasumoto K."/>
            <person name="Yata K."/>
            <person name="Yoshida K."/>
            <person name="Yoshikawa H.-F."/>
            <person name="Zumstein E."/>
            <person name="Yoshikawa H."/>
            <person name="Danchin A."/>
        </authorList>
    </citation>
    <scope>NUCLEOTIDE SEQUENCE [LARGE SCALE GENOMIC DNA]</scope>
    <source>
        <strain>168</strain>
    </source>
</reference>
<evidence type="ECO:0000255" key="1"/>
<evidence type="ECO:0000305" key="2"/>
<sequence length="185" mass="22034">MIQYASESINLPGEITFKDVREIFFYQIAKISCFYFLLFCAIFAAVNFINGWPRIVYGSDALNLFMNSMLIIVMSVLFTLLLLLLLYVKFSRAYKKNERMKSKRTYTLNQEGIRICSKKYDLIFNWDEITAVFEYKNIFRVNTSSGQYIAIPKHFFHSEEEMNRFKEIILKNTETKKLKFKKDQH</sequence>
<name>YCXB_BACSU</name>
<protein>
    <recommendedName>
        <fullName>Uncharacterized protein YcxB</fullName>
    </recommendedName>
    <alternativeName>
        <fullName>ORF6</fullName>
    </alternativeName>
</protein>